<evidence type="ECO:0000255" key="1">
    <source>
        <dbReference type="HAMAP-Rule" id="MF_01445"/>
    </source>
</evidence>
<keyword id="KW-0012">Acyltransferase</keyword>
<keyword id="KW-0963">Cytoplasm</keyword>
<keyword id="KW-0408">Iron</keyword>
<keyword id="KW-0479">Metal-binding</keyword>
<keyword id="KW-1185">Reference proteome</keyword>
<keyword id="KW-0808">Transferase</keyword>
<keyword id="KW-0819">tRNA processing</keyword>
<protein>
    <recommendedName>
        <fullName evidence="1">tRNA N6-adenosine threonylcarbamoyltransferase</fullName>
        <ecNumber evidence="1">2.3.1.234</ecNumber>
    </recommendedName>
    <alternativeName>
        <fullName evidence="1">N6-L-threonylcarbamoyladenine synthase</fullName>
        <shortName evidence="1">t(6)A synthase</shortName>
    </alternativeName>
    <alternativeName>
        <fullName evidence="1">t(6)A37 threonylcarbamoyladenosine biosynthesis protein TsaD</fullName>
    </alternativeName>
    <alternativeName>
        <fullName evidence="1">tRNA threonylcarbamoyladenosine biosynthesis protein TsaD</fullName>
    </alternativeName>
</protein>
<organism>
    <name type="scientific">Shewanella amazonensis (strain ATCC BAA-1098 / SB2B)</name>
    <dbReference type="NCBI Taxonomy" id="326297"/>
    <lineage>
        <taxon>Bacteria</taxon>
        <taxon>Pseudomonadati</taxon>
        <taxon>Pseudomonadota</taxon>
        <taxon>Gammaproteobacteria</taxon>
        <taxon>Alteromonadales</taxon>
        <taxon>Shewanellaceae</taxon>
        <taxon>Shewanella</taxon>
    </lineage>
</organism>
<comment type="function">
    <text evidence="1">Required for the formation of a threonylcarbamoyl group on adenosine at position 37 (t(6)A37) in tRNAs that read codons beginning with adenine. Is involved in the transfer of the threonylcarbamoyl moiety of threonylcarbamoyl-AMP (TC-AMP) to the N6 group of A37, together with TsaE and TsaB. TsaD likely plays a direct catalytic role in this reaction.</text>
</comment>
<comment type="catalytic activity">
    <reaction evidence="1">
        <text>L-threonylcarbamoyladenylate + adenosine(37) in tRNA = N(6)-L-threonylcarbamoyladenosine(37) in tRNA + AMP + H(+)</text>
        <dbReference type="Rhea" id="RHEA:37059"/>
        <dbReference type="Rhea" id="RHEA-COMP:10162"/>
        <dbReference type="Rhea" id="RHEA-COMP:10163"/>
        <dbReference type="ChEBI" id="CHEBI:15378"/>
        <dbReference type="ChEBI" id="CHEBI:73682"/>
        <dbReference type="ChEBI" id="CHEBI:74411"/>
        <dbReference type="ChEBI" id="CHEBI:74418"/>
        <dbReference type="ChEBI" id="CHEBI:456215"/>
        <dbReference type="EC" id="2.3.1.234"/>
    </reaction>
</comment>
<comment type="cofactor">
    <cofactor evidence="1">
        <name>Fe(2+)</name>
        <dbReference type="ChEBI" id="CHEBI:29033"/>
    </cofactor>
    <text evidence="1">Binds 1 Fe(2+) ion per subunit.</text>
</comment>
<comment type="subcellular location">
    <subcellularLocation>
        <location evidence="1">Cytoplasm</location>
    </subcellularLocation>
</comment>
<comment type="similarity">
    <text evidence="1">Belongs to the KAE1 / TsaD family.</text>
</comment>
<dbReference type="EC" id="2.3.1.234" evidence="1"/>
<dbReference type="EMBL" id="CP000507">
    <property type="protein sequence ID" value="ABL99034.1"/>
    <property type="molecule type" value="Genomic_DNA"/>
</dbReference>
<dbReference type="RefSeq" id="WP_011758944.1">
    <property type="nucleotide sequence ID" value="NC_008700.1"/>
</dbReference>
<dbReference type="SMR" id="A1S3S8"/>
<dbReference type="STRING" id="326297.Sama_0827"/>
<dbReference type="KEGG" id="saz:Sama_0827"/>
<dbReference type="eggNOG" id="COG0533">
    <property type="taxonomic scope" value="Bacteria"/>
</dbReference>
<dbReference type="HOGENOM" id="CLU_023208_0_0_6"/>
<dbReference type="OrthoDB" id="9806197at2"/>
<dbReference type="Proteomes" id="UP000009175">
    <property type="component" value="Chromosome"/>
</dbReference>
<dbReference type="GO" id="GO:0005737">
    <property type="term" value="C:cytoplasm"/>
    <property type="evidence" value="ECO:0007669"/>
    <property type="project" value="UniProtKB-SubCell"/>
</dbReference>
<dbReference type="GO" id="GO:0005506">
    <property type="term" value="F:iron ion binding"/>
    <property type="evidence" value="ECO:0007669"/>
    <property type="project" value="UniProtKB-UniRule"/>
</dbReference>
<dbReference type="GO" id="GO:0061711">
    <property type="term" value="F:N(6)-L-threonylcarbamoyladenine synthase activity"/>
    <property type="evidence" value="ECO:0007669"/>
    <property type="project" value="UniProtKB-EC"/>
</dbReference>
<dbReference type="GO" id="GO:0002949">
    <property type="term" value="P:tRNA threonylcarbamoyladenosine modification"/>
    <property type="evidence" value="ECO:0007669"/>
    <property type="project" value="UniProtKB-UniRule"/>
</dbReference>
<dbReference type="CDD" id="cd24133">
    <property type="entry name" value="ASKHA_NBD_TsaD_bac"/>
    <property type="match status" value="1"/>
</dbReference>
<dbReference type="FunFam" id="3.30.420.40:FF:000031">
    <property type="entry name" value="tRNA N6-adenosine threonylcarbamoyltransferase"/>
    <property type="match status" value="1"/>
</dbReference>
<dbReference type="Gene3D" id="3.30.420.40">
    <property type="match status" value="2"/>
</dbReference>
<dbReference type="HAMAP" id="MF_01445">
    <property type="entry name" value="TsaD"/>
    <property type="match status" value="1"/>
</dbReference>
<dbReference type="InterPro" id="IPR043129">
    <property type="entry name" value="ATPase_NBD"/>
</dbReference>
<dbReference type="InterPro" id="IPR000905">
    <property type="entry name" value="Gcp-like_dom"/>
</dbReference>
<dbReference type="InterPro" id="IPR017861">
    <property type="entry name" value="KAE1/TsaD"/>
</dbReference>
<dbReference type="InterPro" id="IPR017860">
    <property type="entry name" value="Peptidase_M22_CS"/>
</dbReference>
<dbReference type="InterPro" id="IPR022450">
    <property type="entry name" value="TsaD"/>
</dbReference>
<dbReference type="NCBIfam" id="TIGR00329">
    <property type="entry name" value="gcp_kae1"/>
    <property type="match status" value="1"/>
</dbReference>
<dbReference type="NCBIfam" id="TIGR03723">
    <property type="entry name" value="T6A_TsaD_YgjD"/>
    <property type="match status" value="1"/>
</dbReference>
<dbReference type="PANTHER" id="PTHR11735">
    <property type="entry name" value="TRNA N6-ADENOSINE THREONYLCARBAMOYLTRANSFERASE"/>
    <property type="match status" value="1"/>
</dbReference>
<dbReference type="PANTHER" id="PTHR11735:SF6">
    <property type="entry name" value="TRNA N6-ADENOSINE THREONYLCARBAMOYLTRANSFERASE, MITOCHONDRIAL"/>
    <property type="match status" value="1"/>
</dbReference>
<dbReference type="Pfam" id="PF00814">
    <property type="entry name" value="TsaD"/>
    <property type="match status" value="1"/>
</dbReference>
<dbReference type="PRINTS" id="PR00789">
    <property type="entry name" value="OSIALOPTASE"/>
</dbReference>
<dbReference type="SUPFAM" id="SSF53067">
    <property type="entry name" value="Actin-like ATPase domain"/>
    <property type="match status" value="2"/>
</dbReference>
<dbReference type="PROSITE" id="PS01016">
    <property type="entry name" value="GLYCOPROTEASE"/>
    <property type="match status" value="1"/>
</dbReference>
<proteinExistence type="inferred from homology"/>
<sequence>MRVLGIETSCDETGIAIYDEEKGLMAHTLYSQVKLHADYGGVVPELASRDHVRKIIPLIREALKNADTRIEDLDGICYTKGPGLIGALLVGACVGRSLAFSWNLPAVGVHHMEGHLLAPMLEDEVPEFPFVALLVSGGHSMLVKVDGIGQYEVLGESIDDAAGEAFDKTAKLMGLDYPGGPRLAKLAASGQPANYKFPRPMTDRPGLDFSFSGLKTFVANTIAAEPDDEQTRANIARAFEEAVVDTLSIKCRRALEQTGYKRLVIAGGVSANVRLRAGLAELMEKLGGKVYYPRGEFCTDNGAMIAYAGLQRLKAGQLEDLAVKGQPRWPLDTLLPV</sequence>
<feature type="chain" id="PRO_0000303531" description="tRNA N6-adenosine threonylcarbamoyltransferase">
    <location>
        <begin position="1"/>
        <end position="337"/>
    </location>
</feature>
<feature type="binding site" evidence="1">
    <location>
        <position position="111"/>
    </location>
    <ligand>
        <name>Fe cation</name>
        <dbReference type="ChEBI" id="CHEBI:24875"/>
    </ligand>
</feature>
<feature type="binding site" evidence="1">
    <location>
        <position position="115"/>
    </location>
    <ligand>
        <name>Fe cation</name>
        <dbReference type="ChEBI" id="CHEBI:24875"/>
    </ligand>
</feature>
<feature type="binding site" evidence="1">
    <location>
        <begin position="134"/>
        <end position="138"/>
    </location>
    <ligand>
        <name>substrate</name>
    </ligand>
</feature>
<feature type="binding site" evidence="1">
    <location>
        <position position="167"/>
    </location>
    <ligand>
        <name>substrate</name>
    </ligand>
</feature>
<feature type="binding site" evidence="1">
    <location>
        <position position="180"/>
    </location>
    <ligand>
        <name>substrate</name>
    </ligand>
</feature>
<feature type="binding site" evidence="1">
    <location>
        <position position="272"/>
    </location>
    <ligand>
        <name>substrate</name>
    </ligand>
</feature>
<feature type="binding site" evidence="1">
    <location>
        <position position="300"/>
    </location>
    <ligand>
        <name>Fe cation</name>
        <dbReference type="ChEBI" id="CHEBI:24875"/>
    </ligand>
</feature>
<accession>A1S3S8</accession>
<reference key="1">
    <citation type="submission" date="2006-12" db="EMBL/GenBank/DDBJ databases">
        <title>Complete sequence of Shewanella amazonensis SB2B.</title>
        <authorList>
            <consortium name="US DOE Joint Genome Institute"/>
            <person name="Copeland A."/>
            <person name="Lucas S."/>
            <person name="Lapidus A."/>
            <person name="Barry K."/>
            <person name="Detter J.C."/>
            <person name="Glavina del Rio T."/>
            <person name="Hammon N."/>
            <person name="Israni S."/>
            <person name="Dalin E."/>
            <person name="Tice H."/>
            <person name="Pitluck S."/>
            <person name="Munk A.C."/>
            <person name="Brettin T."/>
            <person name="Bruce D."/>
            <person name="Han C."/>
            <person name="Tapia R."/>
            <person name="Gilna P."/>
            <person name="Schmutz J."/>
            <person name="Larimer F."/>
            <person name="Land M."/>
            <person name="Hauser L."/>
            <person name="Kyrpides N."/>
            <person name="Mikhailova N."/>
            <person name="Fredrickson J."/>
            <person name="Richardson P."/>
        </authorList>
    </citation>
    <scope>NUCLEOTIDE SEQUENCE [LARGE SCALE GENOMIC DNA]</scope>
    <source>
        <strain>ATCC BAA-1098 / SB2B</strain>
    </source>
</reference>
<name>TSAD_SHEAM</name>
<gene>
    <name evidence="1" type="primary">tsaD</name>
    <name type="synonym">gcp</name>
    <name type="ordered locus">Sama_0827</name>
</gene>